<name>RS17_MAGMM</name>
<reference key="1">
    <citation type="journal article" date="2009" name="Appl. Environ. Microbiol.">
        <title>Complete genome sequence of the chemolithoautotrophic marine magnetotactic coccus strain MC-1.</title>
        <authorList>
            <person name="Schubbe S."/>
            <person name="Williams T.J."/>
            <person name="Xie G."/>
            <person name="Kiss H.E."/>
            <person name="Brettin T.S."/>
            <person name="Martinez D."/>
            <person name="Ross C.A."/>
            <person name="Schuler D."/>
            <person name="Cox B.L."/>
            <person name="Nealson K.H."/>
            <person name="Bazylinski D.A."/>
        </authorList>
    </citation>
    <scope>NUCLEOTIDE SEQUENCE [LARGE SCALE GENOMIC DNA]</scope>
    <source>
        <strain>ATCC BAA-1437 / JCM 17883 / MC-1</strain>
    </source>
</reference>
<feature type="chain" id="PRO_1000054976" description="Small ribosomal subunit protein uS17">
    <location>
        <begin position="1"/>
        <end position="83"/>
    </location>
</feature>
<keyword id="KW-1185">Reference proteome</keyword>
<keyword id="KW-0687">Ribonucleoprotein</keyword>
<keyword id="KW-0689">Ribosomal protein</keyword>
<keyword id="KW-0694">RNA-binding</keyword>
<keyword id="KW-0699">rRNA-binding</keyword>
<comment type="function">
    <text evidence="1">One of the primary rRNA binding proteins, it binds specifically to the 5'-end of 16S ribosomal RNA.</text>
</comment>
<comment type="subunit">
    <text evidence="1">Part of the 30S ribosomal subunit.</text>
</comment>
<comment type="similarity">
    <text evidence="1">Belongs to the universal ribosomal protein uS17 family.</text>
</comment>
<protein>
    <recommendedName>
        <fullName evidence="1">Small ribosomal subunit protein uS17</fullName>
    </recommendedName>
    <alternativeName>
        <fullName evidence="2">30S ribosomal protein S17</fullName>
    </alternativeName>
</protein>
<evidence type="ECO:0000255" key="1">
    <source>
        <dbReference type="HAMAP-Rule" id="MF_01345"/>
    </source>
</evidence>
<evidence type="ECO:0000305" key="2"/>
<gene>
    <name evidence="1" type="primary">rpsQ</name>
    <name type="ordered locus">Mmc1_0856</name>
</gene>
<accession>A0L5Y2</accession>
<dbReference type="EMBL" id="CP000471">
    <property type="protein sequence ID" value="ABK43375.1"/>
    <property type="molecule type" value="Genomic_DNA"/>
</dbReference>
<dbReference type="RefSeq" id="WP_011712534.1">
    <property type="nucleotide sequence ID" value="NC_008576.1"/>
</dbReference>
<dbReference type="SMR" id="A0L5Y2"/>
<dbReference type="STRING" id="156889.Mmc1_0856"/>
<dbReference type="KEGG" id="mgm:Mmc1_0856"/>
<dbReference type="eggNOG" id="COG0186">
    <property type="taxonomic scope" value="Bacteria"/>
</dbReference>
<dbReference type="HOGENOM" id="CLU_073626_1_1_5"/>
<dbReference type="OrthoDB" id="9811714at2"/>
<dbReference type="Proteomes" id="UP000002586">
    <property type="component" value="Chromosome"/>
</dbReference>
<dbReference type="GO" id="GO:0022627">
    <property type="term" value="C:cytosolic small ribosomal subunit"/>
    <property type="evidence" value="ECO:0007669"/>
    <property type="project" value="TreeGrafter"/>
</dbReference>
<dbReference type="GO" id="GO:0019843">
    <property type="term" value="F:rRNA binding"/>
    <property type="evidence" value="ECO:0007669"/>
    <property type="project" value="UniProtKB-UniRule"/>
</dbReference>
<dbReference type="GO" id="GO:0003735">
    <property type="term" value="F:structural constituent of ribosome"/>
    <property type="evidence" value="ECO:0007669"/>
    <property type="project" value="InterPro"/>
</dbReference>
<dbReference type="GO" id="GO:0006412">
    <property type="term" value="P:translation"/>
    <property type="evidence" value="ECO:0007669"/>
    <property type="project" value="UniProtKB-UniRule"/>
</dbReference>
<dbReference type="CDD" id="cd00364">
    <property type="entry name" value="Ribosomal_uS17"/>
    <property type="match status" value="1"/>
</dbReference>
<dbReference type="Gene3D" id="2.40.50.140">
    <property type="entry name" value="Nucleic acid-binding proteins"/>
    <property type="match status" value="1"/>
</dbReference>
<dbReference type="HAMAP" id="MF_01345_B">
    <property type="entry name" value="Ribosomal_uS17_B"/>
    <property type="match status" value="1"/>
</dbReference>
<dbReference type="InterPro" id="IPR012340">
    <property type="entry name" value="NA-bd_OB-fold"/>
</dbReference>
<dbReference type="InterPro" id="IPR000266">
    <property type="entry name" value="Ribosomal_uS17"/>
</dbReference>
<dbReference type="InterPro" id="IPR019984">
    <property type="entry name" value="Ribosomal_uS17_bact/chlr"/>
</dbReference>
<dbReference type="InterPro" id="IPR019979">
    <property type="entry name" value="Ribosomal_uS17_CS"/>
</dbReference>
<dbReference type="NCBIfam" id="NF004123">
    <property type="entry name" value="PRK05610.1"/>
    <property type="match status" value="1"/>
</dbReference>
<dbReference type="NCBIfam" id="TIGR03635">
    <property type="entry name" value="uS17_bact"/>
    <property type="match status" value="1"/>
</dbReference>
<dbReference type="PANTHER" id="PTHR10744">
    <property type="entry name" value="40S RIBOSOMAL PROTEIN S11 FAMILY MEMBER"/>
    <property type="match status" value="1"/>
</dbReference>
<dbReference type="PANTHER" id="PTHR10744:SF1">
    <property type="entry name" value="SMALL RIBOSOMAL SUBUNIT PROTEIN US17M"/>
    <property type="match status" value="1"/>
</dbReference>
<dbReference type="Pfam" id="PF00366">
    <property type="entry name" value="Ribosomal_S17"/>
    <property type="match status" value="1"/>
</dbReference>
<dbReference type="PRINTS" id="PR00973">
    <property type="entry name" value="RIBOSOMALS17"/>
</dbReference>
<dbReference type="SUPFAM" id="SSF50249">
    <property type="entry name" value="Nucleic acid-binding proteins"/>
    <property type="match status" value="1"/>
</dbReference>
<dbReference type="PROSITE" id="PS00056">
    <property type="entry name" value="RIBOSOMAL_S17"/>
    <property type="match status" value="1"/>
</dbReference>
<sequence length="83" mass="9616">MAKRIMQGVVVSDKMDKTVVVLVERKVRHPLYGKIVRQSKKYKAHDEENQYRTGDMVMIQESRPLSKDKNWVVTERTAVAVEG</sequence>
<proteinExistence type="inferred from homology"/>
<organism>
    <name type="scientific">Magnetococcus marinus (strain ATCC BAA-1437 / JCM 17883 / MC-1)</name>
    <dbReference type="NCBI Taxonomy" id="156889"/>
    <lineage>
        <taxon>Bacteria</taxon>
        <taxon>Pseudomonadati</taxon>
        <taxon>Pseudomonadota</taxon>
        <taxon>Alphaproteobacteria</taxon>
        <taxon>Magnetococcales</taxon>
        <taxon>Magnetococcaceae</taxon>
        <taxon>Magnetococcus</taxon>
    </lineage>
</organism>